<name>NOC_BACC0</name>
<dbReference type="EMBL" id="CP001283">
    <property type="protein sequence ID" value="ACK87180.1"/>
    <property type="molecule type" value="Genomic_DNA"/>
</dbReference>
<dbReference type="RefSeq" id="WP_000799028.1">
    <property type="nucleotide sequence ID" value="NC_011773.1"/>
</dbReference>
<dbReference type="SMR" id="B7JIK8"/>
<dbReference type="GeneID" id="45025309"/>
<dbReference type="KEGG" id="bcu:BCAH820_5591"/>
<dbReference type="HOGENOM" id="CLU_023853_0_1_9"/>
<dbReference type="Proteomes" id="UP000001363">
    <property type="component" value="Chromosome"/>
</dbReference>
<dbReference type="GO" id="GO:0005694">
    <property type="term" value="C:chromosome"/>
    <property type="evidence" value="ECO:0007669"/>
    <property type="project" value="TreeGrafter"/>
</dbReference>
<dbReference type="GO" id="GO:0005737">
    <property type="term" value="C:cytoplasm"/>
    <property type="evidence" value="ECO:0007669"/>
    <property type="project" value="UniProtKB-UniRule"/>
</dbReference>
<dbReference type="GO" id="GO:0009295">
    <property type="term" value="C:nucleoid"/>
    <property type="evidence" value="ECO:0007669"/>
    <property type="project" value="UniProtKB-SubCell"/>
</dbReference>
<dbReference type="GO" id="GO:0003677">
    <property type="term" value="F:DNA binding"/>
    <property type="evidence" value="ECO:0007669"/>
    <property type="project" value="UniProtKB-UniRule"/>
</dbReference>
<dbReference type="GO" id="GO:0007059">
    <property type="term" value="P:chromosome segregation"/>
    <property type="evidence" value="ECO:0007669"/>
    <property type="project" value="TreeGrafter"/>
</dbReference>
<dbReference type="GO" id="GO:0000917">
    <property type="term" value="P:division septum assembly"/>
    <property type="evidence" value="ECO:0007669"/>
    <property type="project" value="UniProtKB-KW"/>
</dbReference>
<dbReference type="GO" id="GO:0045881">
    <property type="term" value="P:positive regulation of sporulation resulting in formation of a cellular spore"/>
    <property type="evidence" value="ECO:0007669"/>
    <property type="project" value="TreeGrafter"/>
</dbReference>
<dbReference type="CDD" id="cd16393">
    <property type="entry name" value="SPO0J_N"/>
    <property type="match status" value="1"/>
</dbReference>
<dbReference type="FunFam" id="1.10.10.2830:FF:000001">
    <property type="entry name" value="Chromosome partitioning protein ParB"/>
    <property type="match status" value="1"/>
</dbReference>
<dbReference type="FunFam" id="3.90.1530.30:FF:000001">
    <property type="entry name" value="Chromosome partitioning protein ParB"/>
    <property type="match status" value="1"/>
</dbReference>
<dbReference type="Gene3D" id="1.10.10.2830">
    <property type="match status" value="1"/>
</dbReference>
<dbReference type="Gene3D" id="3.90.1530.30">
    <property type="match status" value="1"/>
</dbReference>
<dbReference type="HAMAP" id="MF_02015">
    <property type="entry name" value="ParB_Noc"/>
    <property type="match status" value="1"/>
</dbReference>
<dbReference type="InterPro" id="IPR050336">
    <property type="entry name" value="Chromosome_partition/occlusion"/>
</dbReference>
<dbReference type="InterPro" id="IPR041468">
    <property type="entry name" value="HTH_ParB/Spo0J"/>
</dbReference>
<dbReference type="InterPro" id="IPR023705">
    <property type="entry name" value="Nucleoid_occlusion_protein"/>
</dbReference>
<dbReference type="InterPro" id="IPR004437">
    <property type="entry name" value="ParB/RepB/Spo0J"/>
</dbReference>
<dbReference type="InterPro" id="IPR003115">
    <property type="entry name" value="ParB/Sulfiredoxin_dom"/>
</dbReference>
<dbReference type="InterPro" id="IPR036086">
    <property type="entry name" value="ParB/Sulfiredoxin_sf"/>
</dbReference>
<dbReference type="NCBIfam" id="TIGR04285">
    <property type="entry name" value="nucleoid_noc"/>
    <property type="match status" value="1"/>
</dbReference>
<dbReference type="NCBIfam" id="TIGR00180">
    <property type="entry name" value="parB_part"/>
    <property type="match status" value="1"/>
</dbReference>
<dbReference type="PANTHER" id="PTHR33375">
    <property type="entry name" value="CHROMOSOME-PARTITIONING PROTEIN PARB-RELATED"/>
    <property type="match status" value="1"/>
</dbReference>
<dbReference type="PANTHER" id="PTHR33375:SF8">
    <property type="entry name" value="NUCLEOID OCCLUSION PROTEIN"/>
    <property type="match status" value="1"/>
</dbReference>
<dbReference type="Pfam" id="PF17762">
    <property type="entry name" value="HTH_ParB"/>
    <property type="match status" value="1"/>
</dbReference>
<dbReference type="Pfam" id="PF02195">
    <property type="entry name" value="ParBc"/>
    <property type="match status" value="1"/>
</dbReference>
<dbReference type="SMART" id="SM00470">
    <property type="entry name" value="ParB"/>
    <property type="match status" value="1"/>
</dbReference>
<dbReference type="SUPFAM" id="SSF110849">
    <property type="entry name" value="ParB/Sulfiredoxin"/>
    <property type="match status" value="1"/>
</dbReference>
<gene>
    <name evidence="1" type="primary">noc</name>
    <name type="ordered locus">BCAH820_5591</name>
</gene>
<reference key="1">
    <citation type="submission" date="2008-10" db="EMBL/GenBank/DDBJ databases">
        <title>Genome sequence of Bacillus cereus AH820.</title>
        <authorList>
            <person name="Dodson R.J."/>
            <person name="Durkin A.S."/>
            <person name="Rosovitz M.J."/>
            <person name="Rasko D.A."/>
            <person name="Hoffmaster A."/>
            <person name="Ravel J."/>
            <person name="Sutton G."/>
        </authorList>
    </citation>
    <scope>NUCLEOTIDE SEQUENCE [LARGE SCALE GENOMIC DNA]</scope>
    <source>
        <strain>AH820</strain>
    </source>
</reference>
<proteinExistence type="inferred from homology"/>
<protein>
    <recommendedName>
        <fullName evidence="1">Nucleoid occlusion protein</fullName>
        <shortName evidence="1">Noc</shortName>
    </recommendedName>
</protein>
<keyword id="KW-0131">Cell cycle</keyword>
<keyword id="KW-0132">Cell division</keyword>
<keyword id="KW-0963">Cytoplasm</keyword>
<keyword id="KW-0238">DNA-binding</keyword>
<keyword id="KW-0717">Septation</keyword>
<comment type="function">
    <text evidence="1">Effects nucleoid occlusion by binding relatively nonspecifically to DNA and preventing the assembly of the division machinery in the vicinity of the nucleoid, especially under conditions that disturb the cell cycle. It helps to coordinate cell division and chromosome segregation by preventing the formation of the Z ring through the nucleoid, which would cause chromosome breakage.</text>
</comment>
<comment type="subcellular location">
    <subcellularLocation>
        <location evidence="1">Cytoplasm</location>
        <location evidence="1">Nucleoid</location>
    </subcellularLocation>
</comment>
<comment type="similarity">
    <text evidence="1">Belongs to the ParB family.</text>
</comment>
<accession>B7JIK8</accession>
<sequence>MKNTFSRLFGFGDKESEFELQDESHEEIDKKVYEEIQEIPIVNITPNRYQPRTVFDDARIEELALTIRTHGLIQPIVVRQYEDDKYEIIAGERRFRAATKLGWEKVPAIIKNLNDTETASVALIENLQREELTAIEEAVAYQKLIELHNLTQEALAQRLGKGQSTIANKLRLLKLPEEIKSALLEKSITERHARALIPLKNEELQLKVLQEIVEKQLNVKQTEERITKLLEEAKPKRKAKQKAVSRDTRIAMNTIRQSLQMVADSGLNVNSEEEEFDEYYQITIQIPKKK</sequence>
<feature type="chain" id="PRO_1000189529" description="Nucleoid occlusion protein">
    <location>
        <begin position="1"/>
        <end position="290"/>
    </location>
</feature>
<feature type="DNA-binding region" description="H-T-H motif" evidence="1">
    <location>
        <begin position="153"/>
        <end position="172"/>
    </location>
</feature>
<organism>
    <name type="scientific">Bacillus cereus (strain AH820)</name>
    <dbReference type="NCBI Taxonomy" id="405535"/>
    <lineage>
        <taxon>Bacteria</taxon>
        <taxon>Bacillati</taxon>
        <taxon>Bacillota</taxon>
        <taxon>Bacilli</taxon>
        <taxon>Bacillales</taxon>
        <taxon>Bacillaceae</taxon>
        <taxon>Bacillus</taxon>
        <taxon>Bacillus cereus group</taxon>
    </lineage>
</organism>
<evidence type="ECO:0000255" key="1">
    <source>
        <dbReference type="HAMAP-Rule" id="MF_02015"/>
    </source>
</evidence>